<proteinExistence type="inferred from homology"/>
<reference key="1">
    <citation type="journal article" date="2004" name="Nucleic Acids Res.">
        <title>The genome sequence of Bacillus cereus ATCC 10987 reveals metabolic adaptations and a large plasmid related to Bacillus anthracis pXO1.</title>
        <authorList>
            <person name="Rasko D.A."/>
            <person name="Ravel J."/>
            <person name="Oekstad O.A."/>
            <person name="Helgason E."/>
            <person name="Cer R.Z."/>
            <person name="Jiang L."/>
            <person name="Shores K.A."/>
            <person name="Fouts D.E."/>
            <person name="Tourasse N.J."/>
            <person name="Angiuoli S.V."/>
            <person name="Kolonay J.F."/>
            <person name="Nelson W.C."/>
            <person name="Kolstoe A.-B."/>
            <person name="Fraser C.M."/>
            <person name="Read T.D."/>
        </authorList>
    </citation>
    <scope>NUCLEOTIDE SEQUENCE [LARGE SCALE GENOMIC DNA]</scope>
    <source>
        <strain>ATCC 10987 / NRS 248</strain>
    </source>
</reference>
<feature type="chain" id="PRO_0000113736" description="Protein GrpE">
    <location>
        <begin position="1"/>
        <end position="192"/>
    </location>
</feature>
<feature type="region of interest" description="Disordered" evidence="2">
    <location>
        <begin position="1"/>
        <end position="39"/>
    </location>
</feature>
<feature type="compositionally biased region" description="Basic and acidic residues" evidence="2">
    <location>
        <begin position="1"/>
        <end position="20"/>
    </location>
</feature>
<feature type="compositionally biased region" description="Acidic residues" evidence="2">
    <location>
        <begin position="25"/>
        <end position="34"/>
    </location>
</feature>
<organism>
    <name type="scientific">Bacillus cereus (strain ATCC 10987 / NRS 248)</name>
    <dbReference type="NCBI Taxonomy" id="222523"/>
    <lineage>
        <taxon>Bacteria</taxon>
        <taxon>Bacillati</taxon>
        <taxon>Bacillota</taxon>
        <taxon>Bacilli</taxon>
        <taxon>Bacillales</taxon>
        <taxon>Bacillaceae</taxon>
        <taxon>Bacillus</taxon>
        <taxon>Bacillus cereus group</taxon>
    </lineage>
</organism>
<keyword id="KW-0143">Chaperone</keyword>
<keyword id="KW-0963">Cytoplasm</keyword>
<keyword id="KW-0346">Stress response</keyword>
<accession>Q730M0</accession>
<protein>
    <recommendedName>
        <fullName evidence="1">Protein GrpE</fullName>
    </recommendedName>
    <alternativeName>
        <fullName evidence="1">HSP-70 cofactor</fullName>
    </alternativeName>
</protein>
<dbReference type="EMBL" id="AE017194">
    <property type="protein sequence ID" value="AAS43297.1"/>
    <property type="molecule type" value="Genomic_DNA"/>
</dbReference>
<dbReference type="SMR" id="Q730M0"/>
<dbReference type="KEGG" id="bca:BCE_4396"/>
<dbReference type="HOGENOM" id="CLU_057217_5_2_9"/>
<dbReference type="Proteomes" id="UP000002527">
    <property type="component" value="Chromosome"/>
</dbReference>
<dbReference type="GO" id="GO:0005737">
    <property type="term" value="C:cytoplasm"/>
    <property type="evidence" value="ECO:0007669"/>
    <property type="project" value="UniProtKB-SubCell"/>
</dbReference>
<dbReference type="GO" id="GO:0000774">
    <property type="term" value="F:adenyl-nucleotide exchange factor activity"/>
    <property type="evidence" value="ECO:0007669"/>
    <property type="project" value="InterPro"/>
</dbReference>
<dbReference type="GO" id="GO:0042803">
    <property type="term" value="F:protein homodimerization activity"/>
    <property type="evidence" value="ECO:0007669"/>
    <property type="project" value="InterPro"/>
</dbReference>
<dbReference type="GO" id="GO:0051087">
    <property type="term" value="F:protein-folding chaperone binding"/>
    <property type="evidence" value="ECO:0007669"/>
    <property type="project" value="InterPro"/>
</dbReference>
<dbReference type="GO" id="GO:0051082">
    <property type="term" value="F:unfolded protein binding"/>
    <property type="evidence" value="ECO:0007669"/>
    <property type="project" value="TreeGrafter"/>
</dbReference>
<dbReference type="GO" id="GO:0006457">
    <property type="term" value="P:protein folding"/>
    <property type="evidence" value="ECO:0007669"/>
    <property type="project" value="InterPro"/>
</dbReference>
<dbReference type="CDD" id="cd00446">
    <property type="entry name" value="GrpE"/>
    <property type="match status" value="1"/>
</dbReference>
<dbReference type="FunFam" id="2.30.22.10:FF:000001">
    <property type="entry name" value="Protein GrpE"/>
    <property type="match status" value="1"/>
</dbReference>
<dbReference type="FunFam" id="3.90.20.20:FF:000002">
    <property type="entry name" value="Protein GrpE"/>
    <property type="match status" value="1"/>
</dbReference>
<dbReference type="Gene3D" id="3.90.20.20">
    <property type="match status" value="1"/>
</dbReference>
<dbReference type="Gene3D" id="2.30.22.10">
    <property type="entry name" value="Head domain of nucleotide exchange factor GrpE"/>
    <property type="match status" value="1"/>
</dbReference>
<dbReference type="HAMAP" id="MF_01151">
    <property type="entry name" value="GrpE"/>
    <property type="match status" value="1"/>
</dbReference>
<dbReference type="InterPro" id="IPR000740">
    <property type="entry name" value="GrpE"/>
</dbReference>
<dbReference type="InterPro" id="IPR013805">
    <property type="entry name" value="GrpE_coiled_coil"/>
</dbReference>
<dbReference type="InterPro" id="IPR009012">
    <property type="entry name" value="GrpE_head"/>
</dbReference>
<dbReference type="NCBIfam" id="NF010738">
    <property type="entry name" value="PRK14140.1"/>
    <property type="match status" value="1"/>
</dbReference>
<dbReference type="PANTHER" id="PTHR21237">
    <property type="entry name" value="GRPE PROTEIN"/>
    <property type="match status" value="1"/>
</dbReference>
<dbReference type="PANTHER" id="PTHR21237:SF23">
    <property type="entry name" value="GRPE PROTEIN HOMOLOG, MITOCHONDRIAL"/>
    <property type="match status" value="1"/>
</dbReference>
<dbReference type="Pfam" id="PF01025">
    <property type="entry name" value="GrpE"/>
    <property type="match status" value="1"/>
</dbReference>
<dbReference type="PRINTS" id="PR00773">
    <property type="entry name" value="GRPEPROTEIN"/>
</dbReference>
<dbReference type="SUPFAM" id="SSF58014">
    <property type="entry name" value="Coiled-coil domain of nucleotide exchange factor GrpE"/>
    <property type="match status" value="1"/>
</dbReference>
<dbReference type="SUPFAM" id="SSF51064">
    <property type="entry name" value="Head domain of nucleotide exchange factor GrpE"/>
    <property type="match status" value="1"/>
</dbReference>
<dbReference type="PROSITE" id="PS01071">
    <property type="entry name" value="GRPE"/>
    <property type="match status" value="1"/>
</dbReference>
<evidence type="ECO:0000255" key="1">
    <source>
        <dbReference type="HAMAP-Rule" id="MF_01151"/>
    </source>
</evidence>
<evidence type="ECO:0000256" key="2">
    <source>
        <dbReference type="SAM" id="MobiDB-lite"/>
    </source>
</evidence>
<comment type="function">
    <text evidence="1">Participates actively in the response to hyperosmotic and heat shock by preventing the aggregation of stress-denatured proteins, in association with DnaK and GrpE. It is the nucleotide exchange factor for DnaK and may function as a thermosensor. Unfolded proteins bind initially to DnaJ; upon interaction with the DnaJ-bound protein, DnaK hydrolyzes its bound ATP, resulting in the formation of a stable complex. GrpE releases ADP from DnaK; ATP binding to DnaK triggers the release of the substrate protein, thus completing the reaction cycle. Several rounds of ATP-dependent interactions between DnaJ, DnaK and GrpE are required for fully efficient folding.</text>
</comment>
<comment type="subunit">
    <text evidence="1">Homodimer.</text>
</comment>
<comment type="subcellular location">
    <subcellularLocation>
        <location evidence="1">Cytoplasm</location>
    </subcellularLocation>
</comment>
<comment type="similarity">
    <text evidence="1">Belongs to the GrpE family.</text>
</comment>
<sequence length="192" mass="22205">MEERNEQVVEEVKEEVKEAQVEEAVTSEDSEESVEEKSEAALLQEKVDELQAKLTETEGRMLRLQADFENYKRRVQMDKQAAEKYRAQSLVSDILPALDNFERAMQVEANDEQMKSLLQGMEMVYRQLLEAMTKEGVEAIEAVGKQFDPHEHQAVMQVEDSEFESNAVVEEFQKGYKLKDRVIRPSMVKVNQ</sequence>
<gene>
    <name evidence="1" type="primary">grpE</name>
    <name type="ordered locus">BCE_4396</name>
</gene>
<name>GRPE_BACC1</name>